<keyword id="KW-0963">Cytoplasm</keyword>
<keyword id="KW-0238">DNA-binding</keyword>
<keyword id="KW-1185">Reference proteome</keyword>
<keyword id="KW-0804">Transcription</keyword>
<keyword id="KW-0805">Transcription regulation</keyword>
<organism>
    <name type="scientific">Fusobacterium nucleatum subsp. nucleatum (strain ATCC 25586 / DSM 15643 / BCRC 10681 / CIP 101130 / JCM 8532 / KCTC 2640 / LMG 13131 / VPI 4355)</name>
    <dbReference type="NCBI Taxonomy" id="190304"/>
    <lineage>
        <taxon>Bacteria</taxon>
        <taxon>Fusobacteriati</taxon>
        <taxon>Fusobacteriota</taxon>
        <taxon>Fusobacteriia</taxon>
        <taxon>Fusobacteriales</taxon>
        <taxon>Fusobacteriaceae</taxon>
        <taxon>Fusobacterium</taxon>
    </lineage>
</organism>
<protein>
    <recommendedName>
        <fullName evidence="1">Probable transcriptional regulatory protein FN1661</fullName>
    </recommendedName>
</protein>
<comment type="subcellular location">
    <subcellularLocation>
        <location evidence="1">Cytoplasm</location>
    </subcellularLocation>
</comment>
<comment type="similarity">
    <text evidence="1">Belongs to the TACO1 family.</text>
</comment>
<proteinExistence type="inferred from homology"/>
<evidence type="ECO:0000255" key="1">
    <source>
        <dbReference type="HAMAP-Rule" id="MF_00693"/>
    </source>
</evidence>
<evidence type="ECO:0000256" key="2">
    <source>
        <dbReference type="SAM" id="MobiDB-lite"/>
    </source>
</evidence>
<sequence length="249" mass="27768">MSGHSKWNNIQHRKGAQDKKRAKLFTKFGRELTIAAKEGGGDPNFNPRLRLAIEKAKAGNMPKDILERAIKKGSGELEGVDFTEMRYEGYGPAGTAFIVEAVTDNKNRTASEMRMTFTRKDGNLGADGAVSWMFKKKGVITVKAEGIDADEFMMAALEAGAEDVTEDDGYFEVTTEYTEFQTVLENLKNAGYQYEEAEISMIPENTVEITDLETAKKVMALYDALEDLDDSQNVYSNFDIPDEILEQLD</sequence>
<feature type="chain" id="PRO_0000175812" description="Probable transcriptional regulatory protein FN1661">
    <location>
        <begin position="1"/>
        <end position="249"/>
    </location>
</feature>
<feature type="region of interest" description="Disordered" evidence="2">
    <location>
        <begin position="1"/>
        <end position="20"/>
    </location>
</feature>
<feature type="compositionally biased region" description="Polar residues" evidence="2">
    <location>
        <begin position="1"/>
        <end position="10"/>
    </location>
</feature>
<dbReference type="EMBL" id="AE009951">
    <property type="protein sequence ID" value="AAL93776.1"/>
    <property type="molecule type" value="Genomic_DNA"/>
</dbReference>
<dbReference type="RefSeq" id="NP_602477.1">
    <property type="nucleotide sequence ID" value="NC_003454.1"/>
</dbReference>
<dbReference type="RefSeq" id="WP_005904156.1">
    <property type="nucleotide sequence ID" value="NZ_OZ209243.1"/>
</dbReference>
<dbReference type="SMR" id="Q8RIE0"/>
<dbReference type="FunCoup" id="Q8RIE0">
    <property type="interactions" value="323"/>
</dbReference>
<dbReference type="STRING" id="190304.FN1661"/>
<dbReference type="PaxDb" id="190304-FN1661"/>
<dbReference type="EnsemblBacteria" id="AAL93776">
    <property type="protein sequence ID" value="AAL93776"/>
    <property type="gene ID" value="FN1661"/>
</dbReference>
<dbReference type="KEGG" id="fnu:FN1661"/>
<dbReference type="PATRIC" id="fig|190304.8.peg.154"/>
<dbReference type="eggNOG" id="COG0217">
    <property type="taxonomic scope" value="Bacteria"/>
</dbReference>
<dbReference type="HOGENOM" id="CLU_062974_2_2_0"/>
<dbReference type="InParanoid" id="Q8RIE0"/>
<dbReference type="BioCyc" id="FNUC190304:G1FZS-164-MONOMER"/>
<dbReference type="Proteomes" id="UP000002521">
    <property type="component" value="Chromosome"/>
</dbReference>
<dbReference type="GO" id="GO:0005829">
    <property type="term" value="C:cytosol"/>
    <property type="evidence" value="ECO:0000318"/>
    <property type="project" value="GO_Central"/>
</dbReference>
<dbReference type="GO" id="GO:0003677">
    <property type="term" value="F:DNA binding"/>
    <property type="evidence" value="ECO:0007669"/>
    <property type="project" value="UniProtKB-UniRule"/>
</dbReference>
<dbReference type="GO" id="GO:0006355">
    <property type="term" value="P:regulation of DNA-templated transcription"/>
    <property type="evidence" value="ECO:0007669"/>
    <property type="project" value="UniProtKB-UniRule"/>
</dbReference>
<dbReference type="FunFam" id="1.10.10.200:FF:000001">
    <property type="entry name" value="Probable transcriptional regulatory protein YebC"/>
    <property type="match status" value="1"/>
</dbReference>
<dbReference type="FunFam" id="3.30.70.980:FF:000002">
    <property type="entry name" value="Probable transcriptional regulatory protein YebC"/>
    <property type="match status" value="1"/>
</dbReference>
<dbReference type="Gene3D" id="1.10.10.200">
    <property type="match status" value="1"/>
</dbReference>
<dbReference type="Gene3D" id="3.30.70.980">
    <property type="match status" value="2"/>
</dbReference>
<dbReference type="HAMAP" id="MF_00693">
    <property type="entry name" value="Transcrip_reg_TACO1"/>
    <property type="match status" value="1"/>
</dbReference>
<dbReference type="InterPro" id="IPR017856">
    <property type="entry name" value="Integrase-like_N"/>
</dbReference>
<dbReference type="InterPro" id="IPR048300">
    <property type="entry name" value="TACO1_YebC-like_2nd/3rd_dom"/>
</dbReference>
<dbReference type="InterPro" id="IPR049083">
    <property type="entry name" value="TACO1_YebC_N"/>
</dbReference>
<dbReference type="InterPro" id="IPR002876">
    <property type="entry name" value="Transcrip_reg_TACO1-like"/>
</dbReference>
<dbReference type="InterPro" id="IPR026564">
    <property type="entry name" value="Transcrip_reg_TACO1-like_dom3"/>
</dbReference>
<dbReference type="InterPro" id="IPR029072">
    <property type="entry name" value="YebC-like"/>
</dbReference>
<dbReference type="NCBIfam" id="NF001030">
    <property type="entry name" value="PRK00110.1"/>
    <property type="match status" value="1"/>
</dbReference>
<dbReference type="NCBIfam" id="NF009044">
    <property type="entry name" value="PRK12378.1"/>
    <property type="match status" value="1"/>
</dbReference>
<dbReference type="NCBIfam" id="TIGR01033">
    <property type="entry name" value="YebC/PmpR family DNA-binding transcriptional regulator"/>
    <property type="match status" value="1"/>
</dbReference>
<dbReference type="PANTHER" id="PTHR12532:SF6">
    <property type="entry name" value="TRANSCRIPTIONAL REGULATORY PROTEIN YEBC-RELATED"/>
    <property type="match status" value="1"/>
</dbReference>
<dbReference type="PANTHER" id="PTHR12532">
    <property type="entry name" value="TRANSLATIONAL ACTIVATOR OF CYTOCHROME C OXIDASE 1"/>
    <property type="match status" value="1"/>
</dbReference>
<dbReference type="Pfam" id="PF20772">
    <property type="entry name" value="TACO1_YebC_N"/>
    <property type="match status" value="1"/>
</dbReference>
<dbReference type="Pfam" id="PF01709">
    <property type="entry name" value="Transcrip_reg"/>
    <property type="match status" value="1"/>
</dbReference>
<dbReference type="SUPFAM" id="SSF75625">
    <property type="entry name" value="YebC-like"/>
    <property type="match status" value="1"/>
</dbReference>
<name>Y1661_FUSNN</name>
<gene>
    <name type="ordered locus">FN1661</name>
</gene>
<reference key="1">
    <citation type="journal article" date="2002" name="J. Bacteriol.">
        <title>Genome sequence and analysis of the oral bacterium Fusobacterium nucleatum strain ATCC 25586.</title>
        <authorList>
            <person name="Kapatral V."/>
            <person name="Anderson I."/>
            <person name="Ivanova N."/>
            <person name="Reznik G."/>
            <person name="Los T."/>
            <person name="Lykidis A."/>
            <person name="Bhattacharyya A."/>
            <person name="Bartman A."/>
            <person name="Gardner W."/>
            <person name="Grechkin G."/>
            <person name="Zhu L."/>
            <person name="Vasieva O."/>
            <person name="Chu L."/>
            <person name="Kogan Y."/>
            <person name="Chaga O."/>
            <person name="Goltsman E."/>
            <person name="Bernal A."/>
            <person name="Larsen N."/>
            <person name="D'Souza M."/>
            <person name="Walunas T."/>
            <person name="Pusch G."/>
            <person name="Haselkorn R."/>
            <person name="Fonstein M."/>
            <person name="Kyrpides N.C."/>
            <person name="Overbeek R."/>
        </authorList>
    </citation>
    <scope>NUCLEOTIDE SEQUENCE [LARGE SCALE GENOMIC DNA]</scope>
    <source>
        <strain>ATCC 25586 / DSM 15643 / BCRC 10681 / CIP 101130 / JCM 8532 / KCTC 2640 / LMG 13131 / VPI 4355</strain>
    </source>
</reference>
<accession>Q8RIE0</accession>